<feature type="chain" id="PRO_0000108020" description="Uncharacterized glycosyl hydrolase ML0392">
    <location>
        <begin position="1"/>
        <end position="792"/>
    </location>
</feature>
<feature type="region of interest" description="Disordered" evidence="3">
    <location>
        <begin position="753"/>
        <end position="792"/>
    </location>
</feature>
<feature type="compositionally biased region" description="Pro residues" evidence="3">
    <location>
        <begin position="766"/>
        <end position="776"/>
    </location>
</feature>
<feature type="active site" description="Proton donor" evidence="2">
    <location>
        <position position="488"/>
    </location>
</feature>
<feature type="binding site" evidence="1">
    <location>
        <begin position="361"/>
        <end position="362"/>
    </location>
    <ligand>
        <name>substrate</name>
    </ligand>
</feature>
<feature type="binding site" evidence="1">
    <location>
        <begin position="590"/>
        <end position="591"/>
    </location>
    <ligand>
        <name>substrate</name>
    </ligand>
</feature>
<name>Y392_MYCLE</name>
<dbReference type="EC" id="3.2.1.-"/>
<dbReference type="EMBL" id="U00015">
    <property type="protein sequence ID" value="AAC43240.1"/>
    <property type="molecule type" value="Genomic_DNA"/>
</dbReference>
<dbReference type="EMBL" id="AL583918">
    <property type="protein sequence ID" value="CAC29900.1"/>
    <property type="molecule type" value="Genomic_DNA"/>
</dbReference>
<dbReference type="PIR" id="S72831">
    <property type="entry name" value="S72831"/>
</dbReference>
<dbReference type="RefSeq" id="NP_301380.1">
    <property type="nucleotide sequence ID" value="NC_002677.1"/>
</dbReference>
<dbReference type="RefSeq" id="WP_010907704.1">
    <property type="nucleotide sequence ID" value="NC_002677.1"/>
</dbReference>
<dbReference type="SMR" id="Q49736"/>
<dbReference type="STRING" id="272631.gene:17574211"/>
<dbReference type="CAZy" id="GH65">
    <property type="family name" value="Glycoside Hydrolase Family 65"/>
</dbReference>
<dbReference type="KEGG" id="mle:ML0392"/>
<dbReference type="PATRIC" id="fig|272631.5.peg.660"/>
<dbReference type="Leproma" id="ML0392"/>
<dbReference type="eggNOG" id="COG1554">
    <property type="taxonomic scope" value="Bacteria"/>
</dbReference>
<dbReference type="HOGENOM" id="CLU_006285_2_2_11"/>
<dbReference type="OrthoDB" id="9816160at2"/>
<dbReference type="Proteomes" id="UP000000806">
    <property type="component" value="Chromosome"/>
</dbReference>
<dbReference type="GO" id="GO:0030246">
    <property type="term" value="F:carbohydrate binding"/>
    <property type="evidence" value="ECO:0007669"/>
    <property type="project" value="InterPro"/>
</dbReference>
<dbReference type="GO" id="GO:0016757">
    <property type="term" value="F:glycosyltransferase activity"/>
    <property type="evidence" value="ECO:0007669"/>
    <property type="project" value="UniProtKB-ARBA"/>
</dbReference>
<dbReference type="GO" id="GO:0004553">
    <property type="term" value="F:hydrolase activity, hydrolyzing O-glycosyl compounds"/>
    <property type="evidence" value="ECO:0007669"/>
    <property type="project" value="TreeGrafter"/>
</dbReference>
<dbReference type="GO" id="GO:0005975">
    <property type="term" value="P:carbohydrate metabolic process"/>
    <property type="evidence" value="ECO:0007669"/>
    <property type="project" value="InterPro"/>
</dbReference>
<dbReference type="FunFam" id="1.50.10.10:FF:000029">
    <property type="entry name" value="Family 65 glycosyl hydrolase"/>
    <property type="match status" value="1"/>
</dbReference>
<dbReference type="FunFam" id="2.70.98.40:FF:000001">
    <property type="entry name" value="Family 65 glycosyl hydrolase"/>
    <property type="match status" value="1"/>
</dbReference>
<dbReference type="Gene3D" id="1.50.10.10">
    <property type="match status" value="1"/>
</dbReference>
<dbReference type="Gene3D" id="2.70.98.40">
    <property type="entry name" value="Glycoside hydrolase, family 65, N-terminal domain"/>
    <property type="match status" value="1"/>
</dbReference>
<dbReference type="Gene3D" id="2.60.420.10">
    <property type="entry name" value="Maltose phosphorylase, domain 3"/>
    <property type="match status" value="1"/>
</dbReference>
<dbReference type="InterPro" id="IPR008928">
    <property type="entry name" value="6-hairpin_glycosidase_sf"/>
</dbReference>
<dbReference type="InterPro" id="IPR012341">
    <property type="entry name" value="6hp_glycosidase-like_sf"/>
</dbReference>
<dbReference type="InterPro" id="IPR011013">
    <property type="entry name" value="Gal_mutarotase_sf_dom"/>
</dbReference>
<dbReference type="InterPro" id="IPR005194">
    <property type="entry name" value="Glyco_hydro_65_C"/>
</dbReference>
<dbReference type="InterPro" id="IPR005195">
    <property type="entry name" value="Glyco_hydro_65_M"/>
</dbReference>
<dbReference type="InterPro" id="IPR005196">
    <property type="entry name" value="Glyco_hydro_65_N"/>
</dbReference>
<dbReference type="InterPro" id="IPR037018">
    <property type="entry name" value="Glyco_hydro_65_N_sf"/>
</dbReference>
<dbReference type="InterPro" id="IPR017045">
    <property type="entry name" value="Malt_Pase/Glycosyl_Hdrlase"/>
</dbReference>
<dbReference type="PANTHER" id="PTHR11051">
    <property type="entry name" value="GLYCOSYL HYDROLASE-RELATED"/>
    <property type="match status" value="1"/>
</dbReference>
<dbReference type="PANTHER" id="PTHR11051:SF13">
    <property type="entry name" value="GLYCOSYL TRANSFERASE"/>
    <property type="match status" value="1"/>
</dbReference>
<dbReference type="Pfam" id="PF03633">
    <property type="entry name" value="Glyco_hydro_65C"/>
    <property type="match status" value="1"/>
</dbReference>
<dbReference type="Pfam" id="PF03632">
    <property type="entry name" value="Glyco_hydro_65m"/>
    <property type="match status" value="1"/>
</dbReference>
<dbReference type="Pfam" id="PF03636">
    <property type="entry name" value="Glyco_hydro_65N"/>
    <property type="match status" value="1"/>
</dbReference>
<dbReference type="PIRSF" id="PIRSF036289">
    <property type="entry name" value="Glycosyl_hydrolase_malt_phosph"/>
    <property type="match status" value="1"/>
</dbReference>
<dbReference type="SUPFAM" id="SSF74650">
    <property type="entry name" value="Galactose mutarotase-like"/>
    <property type="match status" value="1"/>
</dbReference>
<dbReference type="SUPFAM" id="SSF48208">
    <property type="entry name" value="Six-hairpin glycosidases"/>
    <property type="match status" value="1"/>
</dbReference>
<reference key="1">
    <citation type="submission" date="1994-03" db="EMBL/GenBank/DDBJ databases">
        <authorList>
            <person name="Smith D.R."/>
            <person name="Robison K."/>
        </authorList>
    </citation>
    <scope>NUCLEOTIDE SEQUENCE [GENOMIC DNA]</scope>
</reference>
<reference key="2">
    <citation type="journal article" date="2001" name="Nature">
        <title>Massive gene decay in the leprosy bacillus.</title>
        <authorList>
            <person name="Cole S.T."/>
            <person name="Eiglmeier K."/>
            <person name="Parkhill J."/>
            <person name="James K.D."/>
            <person name="Thomson N.R."/>
            <person name="Wheeler P.R."/>
            <person name="Honore N."/>
            <person name="Garnier T."/>
            <person name="Churcher C.M."/>
            <person name="Harris D.E."/>
            <person name="Mungall K.L."/>
            <person name="Basham D."/>
            <person name="Brown D."/>
            <person name="Chillingworth T."/>
            <person name="Connor R."/>
            <person name="Davies R.M."/>
            <person name="Devlin K."/>
            <person name="Duthoy S."/>
            <person name="Feltwell T."/>
            <person name="Fraser A."/>
            <person name="Hamlin N."/>
            <person name="Holroyd S."/>
            <person name="Hornsby T."/>
            <person name="Jagels K."/>
            <person name="Lacroix C."/>
            <person name="Maclean J."/>
            <person name="Moule S."/>
            <person name="Murphy L.D."/>
            <person name="Oliver K."/>
            <person name="Quail M.A."/>
            <person name="Rajandream M.A."/>
            <person name="Rutherford K.M."/>
            <person name="Rutter S."/>
            <person name="Seeger K."/>
            <person name="Simon S."/>
            <person name="Simmonds M."/>
            <person name="Skelton J."/>
            <person name="Squares R."/>
            <person name="Squares S."/>
            <person name="Stevens K."/>
            <person name="Taylor K."/>
            <person name="Whitehead S."/>
            <person name="Woodward J.R."/>
            <person name="Barrell B.G."/>
        </authorList>
    </citation>
    <scope>NUCLEOTIDE SEQUENCE [LARGE SCALE GENOMIC DNA]</scope>
    <source>
        <strain>TN</strain>
    </source>
</reference>
<sequence>MITEEAFPVEPWQIRETRLDLNLLAQSESLFALSNGHIGLRGNLDEGEPYGLPGTYLNSFYEIRPLPYAEAGYGYPEAGQTVVDVTNGKILRLFVEDEPFDVRYGEVIFHERVLDLCAGTLTRRANWRSPADKQVKVVSTRLVSLAHRSVAAIEYVVEALDKFVRVTVQSELVSNEDQPETSGDPRVSAILDNPLEAVEHEATERGGLLMHRTRASSLMMAAGMDHEVEVPGRVEITTDARPDLARTTVICGLRPGQKLRIVKYLAYGWSSLRSRPALHDQATAALHTARYSGWQGLLDAQRAYLNEFWDSADVEVEGDPESQQAVRFGLFHLLQASARAERRAIPSKGLTGTGYDGHAFWDTEGFVLPVLTYTAPHAVADALRWRASTLQLAKDRAAELGLDGASFCWRTIRGQECSAYWPAGTAAWHINADIAMAFERYRIVTGDHSLEEECGLAVLIETARLWLSLGHHDRHGVWHLDGVTGPDEYTAVVRDNVFTNLMAASNLITAADACLRQPEAAKAMGVTTEEMAAWRDAADAANIPYDDELGVHQQCEGFTTFAEWDFEANTTYPLFLHEAYVRLYPAQVIKQADLVLAMQWQSHAFTPEQKARNVDYYERRMVRDSSLSACTQAVMCAEVGHLELAHDYAYEAALIDLRDLHRNTRDGLHMASLAGAWTALVGGFGGLRDDEGILSIDPQLPHGISRLRFRLRWRGFRLTVDARHADVTYTLRDGPGGELTIRHAGEHLTLKSDSPSTIAVRDRKPLLPPPSQPPGREPVSRRHKSLIISAAR</sequence>
<gene>
    <name type="ordered locus">ML0392</name>
    <name type="ORF">B1620_F1_30</name>
</gene>
<protein>
    <recommendedName>
        <fullName>Uncharacterized glycosyl hydrolase ML0392</fullName>
        <ecNumber>3.2.1.-</ecNumber>
    </recommendedName>
</protein>
<keyword id="KW-0326">Glycosidase</keyword>
<keyword id="KW-0378">Hydrolase</keyword>
<keyword id="KW-1185">Reference proteome</keyword>
<organism>
    <name type="scientific">Mycobacterium leprae (strain TN)</name>
    <dbReference type="NCBI Taxonomy" id="272631"/>
    <lineage>
        <taxon>Bacteria</taxon>
        <taxon>Bacillati</taxon>
        <taxon>Actinomycetota</taxon>
        <taxon>Actinomycetes</taxon>
        <taxon>Mycobacteriales</taxon>
        <taxon>Mycobacteriaceae</taxon>
        <taxon>Mycobacterium</taxon>
    </lineage>
</organism>
<accession>Q49736</accession>
<evidence type="ECO:0000250" key="1">
    <source>
        <dbReference type="UniProtKB" id="D6XZ22"/>
    </source>
</evidence>
<evidence type="ECO:0000250" key="2">
    <source>
        <dbReference type="UniProtKB" id="Q32M88"/>
    </source>
</evidence>
<evidence type="ECO:0000256" key="3">
    <source>
        <dbReference type="SAM" id="MobiDB-lite"/>
    </source>
</evidence>
<evidence type="ECO:0000305" key="4"/>
<comment type="similarity">
    <text evidence="4">Belongs to the glycosyl hydrolase 65 family.</text>
</comment>
<proteinExistence type="inferred from homology"/>